<sequence length="119" mass="13697">MARSVVVSLFVLLALAGLEAIQHAPKIQVYSRHPAENGKPNFLNSYVSGFHPSDIEVDLLKNGKKIEKVEHSDLSFSKDWSFYLLYYTEFTPNEKDEYACRVSHVTFQTPKTVKWDRTM</sequence>
<feature type="signal peptide" evidence="1">
    <location>
        <begin position="1"/>
        <end position="20"/>
    </location>
</feature>
<feature type="chain" id="PRO_0000018757" description="Beta-2-microglobulin">
    <location>
        <begin position="21"/>
        <end position="119"/>
    </location>
</feature>
<feature type="domain" description="Ig-like C1-type">
    <location>
        <begin position="25"/>
        <end position="114"/>
    </location>
</feature>
<accession>O77524</accession>
<dbReference type="EMBL" id="AF032051">
    <property type="protein sequence ID" value="AAC52094.1"/>
    <property type="molecule type" value="Genomic_DNA"/>
</dbReference>
<dbReference type="EMBL" id="AF032050">
    <property type="protein sequence ID" value="AAC52094.1"/>
    <property type="status" value="JOINED"/>
    <property type="molecule type" value="Genomic_DNA"/>
</dbReference>
<dbReference type="SMR" id="O77524"/>
<dbReference type="GO" id="GO:0005576">
    <property type="term" value="C:extracellular region"/>
    <property type="evidence" value="ECO:0007669"/>
    <property type="project" value="UniProtKB-SubCell"/>
</dbReference>
<dbReference type="GO" id="GO:0042612">
    <property type="term" value="C:MHC class I protein complex"/>
    <property type="evidence" value="ECO:0007669"/>
    <property type="project" value="UniProtKB-KW"/>
</dbReference>
<dbReference type="GO" id="GO:0002474">
    <property type="term" value="P:antigen processing and presentation of peptide antigen via MHC class I"/>
    <property type="evidence" value="ECO:0007669"/>
    <property type="project" value="UniProtKB-KW"/>
</dbReference>
<dbReference type="GO" id="GO:0006955">
    <property type="term" value="P:immune response"/>
    <property type="evidence" value="ECO:0007669"/>
    <property type="project" value="InterPro"/>
</dbReference>
<dbReference type="CDD" id="cd05770">
    <property type="entry name" value="IgC1_beta2m"/>
    <property type="match status" value="1"/>
</dbReference>
<dbReference type="FunFam" id="2.60.40.10:FF:001005">
    <property type="entry name" value="Beta-2-microglobulin"/>
    <property type="match status" value="1"/>
</dbReference>
<dbReference type="Gene3D" id="2.60.40.10">
    <property type="entry name" value="Immunoglobulins"/>
    <property type="match status" value="1"/>
</dbReference>
<dbReference type="InterPro" id="IPR015707">
    <property type="entry name" value="B2Microglobulin"/>
</dbReference>
<dbReference type="InterPro" id="IPR007110">
    <property type="entry name" value="Ig-like_dom"/>
</dbReference>
<dbReference type="InterPro" id="IPR036179">
    <property type="entry name" value="Ig-like_dom_sf"/>
</dbReference>
<dbReference type="InterPro" id="IPR013783">
    <property type="entry name" value="Ig-like_fold"/>
</dbReference>
<dbReference type="InterPro" id="IPR003006">
    <property type="entry name" value="Ig/MHC_CS"/>
</dbReference>
<dbReference type="InterPro" id="IPR003597">
    <property type="entry name" value="Ig_C1-set"/>
</dbReference>
<dbReference type="InterPro" id="IPR050160">
    <property type="entry name" value="MHC/Immunoglobulin"/>
</dbReference>
<dbReference type="PANTHER" id="PTHR19944:SF62">
    <property type="entry name" value="BETA-2-MICROGLOBULIN"/>
    <property type="match status" value="1"/>
</dbReference>
<dbReference type="PANTHER" id="PTHR19944">
    <property type="entry name" value="MHC CLASS II-RELATED"/>
    <property type="match status" value="1"/>
</dbReference>
<dbReference type="Pfam" id="PF07654">
    <property type="entry name" value="C1-set"/>
    <property type="match status" value="1"/>
</dbReference>
<dbReference type="SMART" id="SM00407">
    <property type="entry name" value="IGc1"/>
    <property type="match status" value="1"/>
</dbReference>
<dbReference type="SUPFAM" id="SSF48726">
    <property type="entry name" value="Immunoglobulin"/>
    <property type="match status" value="1"/>
</dbReference>
<dbReference type="PROSITE" id="PS50835">
    <property type="entry name" value="IG_LIKE"/>
    <property type="match status" value="1"/>
</dbReference>
<dbReference type="PROSITE" id="PS00290">
    <property type="entry name" value="IG_MHC"/>
    <property type="match status" value="1"/>
</dbReference>
<name>B2MG_BRAAR</name>
<organism>
    <name type="scientific">Brachyteles arachnoides</name>
    <name type="common">Southern muriqui</name>
    <name type="synonym">Woolly spider monkey</name>
    <dbReference type="NCBI Taxonomy" id="30594"/>
    <lineage>
        <taxon>Eukaryota</taxon>
        <taxon>Metazoa</taxon>
        <taxon>Chordata</taxon>
        <taxon>Craniata</taxon>
        <taxon>Vertebrata</taxon>
        <taxon>Euteleostomi</taxon>
        <taxon>Mammalia</taxon>
        <taxon>Eutheria</taxon>
        <taxon>Euarchontoglires</taxon>
        <taxon>Primates</taxon>
        <taxon>Haplorrhini</taxon>
        <taxon>Platyrrhini</taxon>
        <taxon>Atelidae</taxon>
        <taxon>Atelinae</taxon>
        <taxon>Brachyteles</taxon>
    </lineage>
</organism>
<comment type="function">
    <text evidence="1">Component of the class I major histocompatibility complex (MHC). Involved in the presentation of peptide antigens to the immune system (By similarity).</text>
</comment>
<comment type="subunit">
    <text evidence="1">Heterodimer of an alpha chain and a beta chain. Beta-2-microglobulin is the beta-chain of major histocompatibility complex class I molecules (By similarity).</text>
</comment>
<comment type="subcellular location">
    <subcellularLocation>
        <location evidence="1">Secreted</location>
    </subcellularLocation>
</comment>
<comment type="similarity">
    <text evidence="2">Belongs to the beta-2-microglobulin family.</text>
</comment>
<evidence type="ECO:0000250" key="1"/>
<evidence type="ECO:0000305" key="2"/>
<reference key="1">
    <citation type="journal article" date="1998" name="Immunogenetics">
        <title>Beta-2-microglobulin in neotropical primates (Platyrrhini).</title>
        <authorList>
            <person name="Canavez F.C."/>
            <person name="Ladasky J.J."/>
            <person name="Muniz J.A.P.C."/>
            <person name="Seuanez H.N."/>
            <person name="Parham P."/>
        </authorList>
    </citation>
    <scope>NUCLEOTIDE SEQUENCE [GENOMIC DNA]</scope>
    <source>
        <tissue>Blood</tissue>
    </source>
</reference>
<keyword id="KW-0391">Immunity</keyword>
<keyword id="KW-0393">Immunoglobulin domain</keyword>
<keyword id="KW-0490">MHC I</keyword>
<keyword id="KW-0964">Secreted</keyword>
<keyword id="KW-0732">Signal</keyword>
<protein>
    <recommendedName>
        <fullName>Beta-2-microglobulin</fullName>
    </recommendedName>
</protein>
<gene>
    <name type="primary">B2M</name>
</gene>
<proteinExistence type="inferred from homology"/>